<reference key="1">
    <citation type="journal article" date="2008" name="PLoS Genet.">
        <title>The genome of Borrelia recurrentis, the agent of deadly louse-borne relapsing fever, is a degraded subset of tick-borne Borrelia duttonii.</title>
        <authorList>
            <person name="Lescot M."/>
            <person name="Audic S."/>
            <person name="Robert C."/>
            <person name="Nguyen T.T."/>
            <person name="Blanc G."/>
            <person name="Cutler S.J."/>
            <person name="Wincker P."/>
            <person name="Couloux A."/>
            <person name="Claverie J.-M."/>
            <person name="Raoult D."/>
            <person name="Drancourt M."/>
        </authorList>
    </citation>
    <scope>NUCLEOTIDE SEQUENCE [LARGE SCALE GENOMIC DNA]</scope>
    <source>
        <strain>Ly</strain>
    </source>
</reference>
<name>RS18_BORDL</name>
<sequence>MYKDIDSHQRDSRTDGHQDGFKKNPNFRFFKKKTCKFCDMDRVPDYKEFDFLKKFITEQGKILPRRITGTSAKHQRRLALEIKKARYMALLPFVKK</sequence>
<dbReference type="EMBL" id="CP000976">
    <property type="protein sequence ID" value="ACH93072.1"/>
    <property type="molecule type" value="Genomic_DNA"/>
</dbReference>
<dbReference type="RefSeq" id="WP_012537884.1">
    <property type="nucleotide sequence ID" value="NC_011229.1"/>
</dbReference>
<dbReference type="SMR" id="B5RLI7"/>
<dbReference type="STRING" id="412419.BDU_116"/>
<dbReference type="KEGG" id="bdu:BDU_116"/>
<dbReference type="eggNOG" id="COG0238">
    <property type="taxonomic scope" value="Bacteria"/>
</dbReference>
<dbReference type="HOGENOM" id="CLU_148710_0_2_12"/>
<dbReference type="OrthoDB" id="9812008at2"/>
<dbReference type="Proteomes" id="UP000000611">
    <property type="component" value="Chromosome"/>
</dbReference>
<dbReference type="GO" id="GO:0022627">
    <property type="term" value="C:cytosolic small ribosomal subunit"/>
    <property type="evidence" value="ECO:0007669"/>
    <property type="project" value="TreeGrafter"/>
</dbReference>
<dbReference type="GO" id="GO:0070181">
    <property type="term" value="F:small ribosomal subunit rRNA binding"/>
    <property type="evidence" value="ECO:0007669"/>
    <property type="project" value="TreeGrafter"/>
</dbReference>
<dbReference type="GO" id="GO:0003735">
    <property type="term" value="F:structural constituent of ribosome"/>
    <property type="evidence" value="ECO:0007669"/>
    <property type="project" value="InterPro"/>
</dbReference>
<dbReference type="GO" id="GO:0006412">
    <property type="term" value="P:translation"/>
    <property type="evidence" value="ECO:0007669"/>
    <property type="project" value="UniProtKB-UniRule"/>
</dbReference>
<dbReference type="Gene3D" id="4.10.640.10">
    <property type="entry name" value="Ribosomal protein S18"/>
    <property type="match status" value="1"/>
</dbReference>
<dbReference type="HAMAP" id="MF_00270">
    <property type="entry name" value="Ribosomal_bS18"/>
    <property type="match status" value="1"/>
</dbReference>
<dbReference type="InterPro" id="IPR001648">
    <property type="entry name" value="Ribosomal_bS18"/>
</dbReference>
<dbReference type="InterPro" id="IPR018275">
    <property type="entry name" value="Ribosomal_bS18_CS"/>
</dbReference>
<dbReference type="InterPro" id="IPR036870">
    <property type="entry name" value="Ribosomal_bS18_sf"/>
</dbReference>
<dbReference type="NCBIfam" id="TIGR00165">
    <property type="entry name" value="S18"/>
    <property type="match status" value="1"/>
</dbReference>
<dbReference type="PANTHER" id="PTHR13479">
    <property type="entry name" value="30S RIBOSOMAL PROTEIN S18"/>
    <property type="match status" value="1"/>
</dbReference>
<dbReference type="PANTHER" id="PTHR13479:SF40">
    <property type="entry name" value="SMALL RIBOSOMAL SUBUNIT PROTEIN BS18M"/>
    <property type="match status" value="1"/>
</dbReference>
<dbReference type="Pfam" id="PF01084">
    <property type="entry name" value="Ribosomal_S18"/>
    <property type="match status" value="1"/>
</dbReference>
<dbReference type="PRINTS" id="PR00974">
    <property type="entry name" value="RIBOSOMALS18"/>
</dbReference>
<dbReference type="SUPFAM" id="SSF46911">
    <property type="entry name" value="Ribosomal protein S18"/>
    <property type="match status" value="1"/>
</dbReference>
<dbReference type="PROSITE" id="PS00057">
    <property type="entry name" value="RIBOSOMAL_S18"/>
    <property type="match status" value="1"/>
</dbReference>
<proteinExistence type="inferred from homology"/>
<protein>
    <recommendedName>
        <fullName evidence="1">Small ribosomal subunit protein bS18</fullName>
    </recommendedName>
    <alternativeName>
        <fullName evidence="3">30S ribosomal protein S18</fullName>
    </alternativeName>
</protein>
<accession>B5RLI7</accession>
<feature type="chain" id="PRO_1000114398" description="Small ribosomal subunit protein bS18">
    <location>
        <begin position="1"/>
        <end position="96"/>
    </location>
</feature>
<feature type="region of interest" description="Disordered" evidence="2">
    <location>
        <begin position="1"/>
        <end position="25"/>
    </location>
</feature>
<feature type="compositionally biased region" description="Basic and acidic residues" evidence="2">
    <location>
        <begin position="1"/>
        <end position="22"/>
    </location>
</feature>
<organism>
    <name type="scientific">Borrelia duttonii (strain Ly)</name>
    <dbReference type="NCBI Taxonomy" id="412419"/>
    <lineage>
        <taxon>Bacteria</taxon>
        <taxon>Pseudomonadati</taxon>
        <taxon>Spirochaetota</taxon>
        <taxon>Spirochaetia</taxon>
        <taxon>Spirochaetales</taxon>
        <taxon>Borreliaceae</taxon>
        <taxon>Borrelia</taxon>
    </lineage>
</organism>
<evidence type="ECO:0000255" key="1">
    <source>
        <dbReference type="HAMAP-Rule" id="MF_00270"/>
    </source>
</evidence>
<evidence type="ECO:0000256" key="2">
    <source>
        <dbReference type="SAM" id="MobiDB-lite"/>
    </source>
</evidence>
<evidence type="ECO:0000305" key="3"/>
<keyword id="KW-0687">Ribonucleoprotein</keyword>
<keyword id="KW-0689">Ribosomal protein</keyword>
<keyword id="KW-0694">RNA-binding</keyword>
<keyword id="KW-0699">rRNA-binding</keyword>
<comment type="function">
    <text evidence="1">Binds as a heterodimer with protein bS6 to the central domain of the 16S rRNA, where it helps stabilize the platform of the 30S subunit.</text>
</comment>
<comment type="subunit">
    <text evidence="1">Part of the 30S ribosomal subunit. Forms a tight heterodimer with protein bS6.</text>
</comment>
<comment type="similarity">
    <text evidence="1">Belongs to the bacterial ribosomal protein bS18 family.</text>
</comment>
<gene>
    <name evidence="1" type="primary">rpsR</name>
    <name type="ordered locus">BDU_116</name>
</gene>